<proteinExistence type="inferred from homology"/>
<sequence>MGSFSIWHWLIVLVIVMLVFGTKKLRNIGQDLGGAVKGFKDGMKDGEGKAAADPAQSKELRDSTTIDVEAKEKTRQQ</sequence>
<name>TATA_CUPNH</name>
<organism>
    <name type="scientific">Cupriavidus necator (strain ATCC 17699 / DSM 428 / KCTC 22496 / NCIMB 10442 / H16 / Stanier 337)</name>
    <name type="common">Ralstonia eutropha</name>
    <dbReference type="NCBI Taxonomy" id="381666"/>
    <lineage>
        <taxon>Bacteria</taxon>
        <taxon>Pseudomonadati</taxon>
        <taxon>Pseudomonadota</taxon>
        <taxon>Betaproteobacteria</taxon>
        <taxon>Burkholderiales</taxon>
        <taxon>Burkholderiaceae</taxon>
        <taxon>Cupriavidus</taxon>
    </lineage>
</organism>
<gene>
    <name evidence="1" type="primary">tatA</name>
    <name type="ordered locus">H16_A3405</name>
</gene>
<dbReference type="EMBL" id="AM260479">
    <property type="protein sequence ID" value="CAJ94473.1"/>
    <property type="molecule type" value="Genomic_DNA"/>
</dbReference>
<dbReference type="RefSeq" id="WP_010812321.1">
    <property type="nucleotide sequence ID" value="NZ_CP039287.1"/>
</dbReference>
<dbReference type="SMR" id="Q0K698"/>
<dbReference type="STRING" id="381666.H16_A3405"/>
<dbReference type="KEGG" id="reh:H16_A3405"/>
<dbReference type="eggNOG" id="COG1826">
    <property type="taxonomic scope" value="Bacteria"/>
</dbReference>
<dbReference type="HOGENOM" id="CLU_086034_5_3_4"/>
<dbReference type="OrthoDB" id="7066617at2"/>
<dbReference type="Proteomes" id="UP000008210">
    <property type="component" value="Chromosome 1"/>
</dbReference>
<dbReference type="GO" id="GO:0033281">
    <property type="term" value="C:TAT protein transport complex"/>
    <property type="evidence" value="ECO:0007669"/>
    <property type="project" value="UniProtKB-UniRule"/>
</dbReference>
<dbReference type="GO" id="GO:0008320">
    <property type="term" value="F:protein transmembrane transporter activity"/>
    <property type="evidence" value="ECO:0007669"/>
    <property type="project" value="UniProtKB-UniRule"/>
</dbReference>
<dbReference type="GO" id="GO:0043953">
    <property type="term" value="P:protein transport by the Tat complex"/>
    <property type="evidence" value="ECO:0007669"/>
    <property type="project" value="UniProtKB-UniRule"/>
</dbReference>
<dbReference type="Gene3D" id="1.20.5.3310">
    <property type="match status" value="1"/>
</dbReference>
<dbReference type="HAMAP" id="MF_00236">
    <property type="entry name" value="TatA_E"/>
    <property type="match status" value="1"/>
</dbReference>
<dbReference type="InterPro" id="IPR003369">
    <property type="entry name" value="TatA/B/E"/>
</dbReference>
<dbReference type="InterPro" id="IPR006312">
    <property type="entry name" value="TatA/E"/>
</dbReference>
<dbReference type="NCBIfam" id="NF002813">
    <property type="entry name" value="PRK02958.1"/>
    <property type="match status" value="1"/>
</dbReference>
<dbReference type="NCBIfam" id="TIGR01411">
    <property type="entry name" value="tatAE"/>
    <property type="match status" value="1"/>
</dbReference>
<dbReference type="PANTHER" id="PTHR42982">
    <property type="entry name" value="SEC-INDEPENDENT PROTEIN TRANSLOCASE PROTEIN TATA"/>
    <property type="match status" value="1"/>
</dbReference>
<dbReference type="PANTHER" id="PTHR42982:SF1">
    <property type="entry name" value="SEC-INDEPENDENT PROTEIN TRANSLOCASE PROTEIN TATA"/>
    <property type="match status" value="1"/>
</dbReference>
<dbReference type="Pfam" id="PF02416">
    <property type="entry name" value="TatA_B_E"/>
    <property type="match status" value="1"/>
</dbReference>
<comment type="function">
    <text evidence="1">Part of the twin-arginine translocation (Tat) system that transports large folded proteins containing a characteristic twin-arginine motif in their signal peptide across membranes. TatA could form the protein-conducting channel of the Tat system.</text>
</comment>
<comment type="subunit">
    <text evidence="1">The Tat system comprises two distinct complexes: a TatABC complex, containing multiple copies of TatA, TatB and TatC subunits, and a separate TatA complex, containing only TatA subunits. Substrates initially bind to the TatABC complex, which probably triggers association of the separate TatA complex to form the active translocon.</text>
</comment>
<comment type="subcellular location">
    <subcellularLocation>
        <location evidence="1">Cell inner membrane</location>
        <topology evidence="1">Single-pass membrane protein</topology>
    </subcellularLocation>
</comment>
<comment type="similarity">
    <text evidence="1">Belongs to the TatA/E family.</text>
</comment>
<keyword id="KW-0997">Cell inner membrane</keyword>
<keyword id="KW-1003">Cell membrane</keyword>
<keyword id="KW-0472">Membrane</keyword>
<keyword id="KW-0653">Protein transport</keyword>
<keyword id="KW-1185">Reference proteome</keyword>
<keyword id="KW-0811">Translocation</keyword>
<keyword id="KW-0812">Transmembrane</keyword>
<keyword id="KW-1133">Transmembrane helix</keyword>
<keyword id="KW-0813">Transport</keyword>
<accession>Q0K698</accession>
<feature type="chain" id="PRO_1000044426" description="Sec-independent protein translocase protein TatA">
    <location>
        <begin position="1"/>
        <end position="77"/>
    </location>
</feature>
<feature type="transmembrane region" description="Helical" evidence="1">
    <location>
        <begin position="1"/>
        <end position="21"/>
    </location>
</feature>
<feature type="region of interest" description="Disordered" evidence="2">
    <location>
        <begin position="46"/>
        <end position="77"/>
    </location>
</feature>
<reference key="1">
    <citation type="journal article" date="2006" name="Nat. Biotechnol.">
        <title>Genome sequence of the bioplastic-producing 'Knallgas' bacterium Ralstonia eutropha H16.</title>
        <authorList>
            <person name="Pohlmann A."/>
            <person name="Fricke W.F."/>
            <person name="Reinecke F."/>
            <person name="Kusian B."/>
            <person name="Liesegang H."/>
            <person name="Cramm R."/>
            <person name="Eitinger T."/>
            <person name="Ewering C."/>
            <person name="Poetter M."/>
            <person name="Schwartz E."/>
            <person name="Strittmatter A."/>
            <person name="Voss I."/>
            <person name="Gottschalk G."/>
            <person name="Steinbuechel A."/>
            <person name="Friedrich B."/>
            <person name="Bowien B."/>
        </authorList>
    </citation>
    <scope>NUCLEOTIDE SEQUENCE [LARGE SCALE GENOMIC DNA]</scope>
    <source>
        <strain>ATCC 17699 / DSM 428 / KCTC 22496 / NCIMB 10442 / H16 / Stanier 337</strain>
    </source>
</reference>
<evidence type="ECO:0000255" key="1">
    <source>
        <dbReference type="HAMAP-Rule" id="MF_00236"/>
    </source>
</evidence>
<evidence type="ECO:0000256" key="2">
    <source>
        <dbReference type="SAM" id="MobiDB-lite"/>
    </source>
</evidence>
<protein>
    <recommendedName>
        <fullName evidence="1">Sec-independent protein translocase protein TatA</fullName>
    </recommendedName>
</protein>